<gene>
    <name evidence="1" type="primary">pnp</name>
    <name type="ordered locus">FTL_1537</name>
</gene>
<proteinExistence type="inferred from homology"/>
<name>PNP_FRATH</name>
<reference key="1">
    <citation type="submission" date="2006-03" db="EMBL/GenBank/DDBJ databases">
        <title>Complete genome sequence of Francisella tularensis LVS (Live Vaccine Strain).</title>
        <authorList>
            <person name="Chain P."/>
            <person name="Larimer F."/>
            <person name="Land M."/>
            <person name="Stilwagen S."/>
            <person name="Larsson P."/>
            <person name="Bearden S."/>
            <person name="Chu M."/>
            <person name="Oyston P."/>
            <person name="Forsman M."/>
            <person name="Andersson S."/>
            <person name="Lindler L."/>
            <person name="Titball R."/>
            <person name="Garcia E."/>
        </authorList>
    </citation>
    <scope>NUCLEOTIDE SEQUENCE [LARGE SCALE GENOMIC DNA]</scope>
    <source>
        <strain>LVS</strain>
    </source>
</reference>
<organism>
    <name type="scientific">Francisella tularensis subsp. holarctica (strain LVS)</name>
    <dbReference type="NCBI Taxonomy" id="376619"/>
    <lineage>
        <taxon>Bacteria</taxon>
        <taxon>Pseudomonadati</taxon>
        <taxon>Pseudomonadota</taxon>
        <taxon>Gammaproteobacteria</taxon>
        <taxon>Thiotrichales</taxon>
        <taxon>Francisellaceae</taxon>
        <taxon>Francisella</taxon>
    </lineage>
</organism>
<accession>Q2A269</accession>
<evidence type="ECO:0000255" key="1">
    <source>
        <dbReference type="HAMAP-Rule" id="MF_01595"/>
    </source>
</evidence>
<keyword id="KW-0963">Cytoplasm</keyword>
<keyword id="KW-0460">Magnesium</keyword>
<keyword id="KW-0479">Metal-binding</keyword>
<keyword id="KW-0548">Nucleotidyltransferase</keyword>
<keyword id="KW-1185">Reference proteome</keyword>
<keyword id="KW-0694">RNA-binding</keyword>
<keyword id="KW-0808">Transferase</keyword>
<feature type="chain" id="PRO_0000329650" description="Polyribonucleotide nucleotidyltransferase">
    <location>
        <begin position="1"/>
        <end position="693"/>
    </location>
</feature>
<feature type="domain" description="KH" evidence="1">
    <location>
        <begin position="556"/>
        <end position="615"/>
    </location>
</feature>
<feature type="domain" description="S1 motif" evidence="1">
    <location>
        <begin position="625"/>
        <end position="693"/>
    </location>
</feature>
<feature type="binding site" evidence="1">
    <location>
        <position position="489"/>
    </location>
    <ligand>
        <name>Mg(2+)</name>
        <dbReference type="ChEBI" id="CHEBI:18420"/>
    </ligand>
</feature>
<feature type="binding site" evidence="1">
    <location>
        <position position="495"/>
    </location>
    <ligand>
        <name>Mg(2+)</name>
        <dbReference type="ChEBI" id="CHEBI:18420"/>
    </ligand>
</feature>
<sequence length="693" mass="75502">MKIFREVFELGNKEIILETGGMARQADGSVTVSCGNNVVLVTTVVKKSVADGTDFFPLSVHYLEKTYAAGKIPGGFLRREGRPSEEQILISRLIDRSIRPSFPDGFFNEIQIVATVLSYDGAFSPDILALIGASASLAISGAPYDDVVAGVRVGYTNGKYILNPNKQDLRDSDLDLVVSGTYDAILMVESEANSLPESVMLGGILYAHKHLKTIINSINRLAKVASKPRIEYSIYQINKFLKSQIKSQFFGEIKNTYTIASKQERNLKLNAIRKNVLEYIFSSDVDGNEYTEKEILEAFHDIEKDLVRSNILEGKPRIDGRCTETIRPINVKIGVLPGVHGSALFTRGETQALVVTTLGSDRDAQLVESLDGIEKCRYMLHYNFPPYSVGECGMVGMAPKRREIGHANLAKRATQAVFPNEEAYPYVVRVVSEILESNGSSSMATVCGSSLSMMDAGVPIAEPVAGIAMGLIKDGAKYAVLSDILGDEDHLGDMDFKVAGTRYGVTALQMDIKIKGISREILEQALEQARVGRLHILGIMNEVIKEHKEAVSDVAPQIHVMNINPAKIKDVVGRGGATVKGIVEKTGAQIDTSDSGEVKVFAKDKKSMDMAVAMIEEIVAEVEEGQVYKGKIVKLLDSGVFVNLLGSQDGYLPFSEIEQAGMKTNSLVEGQGLEVLVQNIDRGGRVKLSLVAR</sequence>
<comment type="function">
    <text evidence="1">Involved in mRNA degradation. Catalyzes the phosphorolysis of single-stranded polyribonucleotides processively in the 3'- to 5'-direction.</text>
</comment>
<comment type="catalytic activity">
    <reaction evidence="1">
        <text>RNA(n+1) + phosphate = RNA(n) + a ribonucleoside 5'-diphosphate</text>
        <dbReference type="Rhea" id="RHEA:22096"/>
        <dbReference type="Rhea" id="RHEA-COMP:14527"/>
        <dbReference type="Rhea" id="RHEA-COMP:17342"/>
        <dbReference type="ChEBI" id="CHEBI:43474"/>
        <dbReference type="ChEBI" id="CHEBI:57930"/>
        <dbReference type="ChEBI" id="CHEBI:140395"/>
        <dbReference type="EC" id="2.7.7.8"/>
    </reaction>
</comment>
<comment type="cofactor">
    <cofactor evidence="1">
        <name>Mg(2+)</name>
        <dbReference type="ChEBI" id="CHEBI:18420"/>
    </cofactor>
</comment>
<comment type="subunit">
    <text evidence="1">Component of the RNA degradosome, which is a multiprotein complex involved in RNA processing and mRNA degradation.</text>
</comment>
<comment type="subcellular location">
    <subcellularLocation>
        <location evidence="1">Cytoplasm</location>
    </subcellularLocation>
</comment>
<comment type="similarity">
    <text evidence="1">Belongs to the polyribonucleotide nucleotidyltransferase family.</text>
</comment>
<protein>
    <recommendedName>
        <fullName evidence="1">Polyribonucleotide nucleotidyltransferase</fullName>
        <ecNumber evidence="1">2.7.7.8</ecNumber>
    </recommendedName>
    <alternativeName>
        <fullName evidence="1">Polynucleotide phosphorylase</fullName>
        <shortName evidence="1">PNPase</shortName>
    </alternativeName>
</protein>
<dbReference type="EC" id="2.7.7.8" evidence="1"/>
<dbReference type="EMBL" id="AM233362">
    <property type="protein sequence ID" value="CAJ79976.1"/>
    <property type="molecule type" value="Genomic_DNA"/>
</dbReference>
<dbReference type="RefSeq" id="WP_003016880.1">
    <property type="nucleotide sequence ID" value="NZ_CP009694.1"/>
</dbReference>
<dbReference type="SMR" id="Q2A269"/>
<dbReference type="KEGG" id="ftl:FTL_1537"/>
<dbReference type="Proteomes" id="UP000001944">
    <property type="component" value="Chromosome"/>
</dbReference>
<dbReference type="GO" id="GO:0005829">
    <property type="term" value="C:cytosol"/>
    <property type="evidence" value="ECO:0007669"/>
    <property type="project" value="TreeGrafter"/>
</dbReference>
<dbReference type="GO" id="GO:0000175">
    <property type="term" value="F:3'-5'-RNA exonuclease activity"/>
    <property type="evidence" value="ECO:0007669"/>
    <property type="project" value="TreeGrafter"/>
</dbReference>
<dbReference type="GO" id="GO:0000287">
    <property type="term" value="F:magnesium ion binding"/>
    <property type="evidence" value="ECO:0007669"/>
    <property type="project" value="UniProtKB-UniRule"/>
</dbReference>
<dbReference type="GO" id="GO:0004654">
    <property type="term" value="F:polyribonucleotide nucleotidyltransferase activity"/>
    <property type="evidence" value="ECO:0007669"/>
    <property type="project" value="UniProtKB-UniRule"/>
</dbReference>
<dbReference type="GO" id="GO:0003723">
    <property type="term" value="F:RNA binding"/>
    <property type="evidence" value="ECO:0007669"/>
    <property type="project" value="UniProtKB-UniRule"/>
</dbReference>
<dbReference type="GO" id="GO:0006402">
    <property type="term" value="P:mRNA catabolic process"/>
    <property type="evidence" value="ECO:0007669"/>
    <property type="project" value="UniProtKB-UniRule"/>
</dbReference>
<dbReference type="GO" id="GO:0006396">
    <property type="term" value="P:RNA processing"/>
    <property type="evidence" value="ECO:0007669"/>
    <property type="project" value="InterPro"/>
</dbReference>
<dbReference type="CDD" id="cd02393">
    <property type="entry name" value="KH-I_PNPase"/>
    <property type="match status" value="1"/>
</dbReference>
<dbReference type="CDD" id="cd11363">
    <property type="entry name" value="RNase_PH_PNPase_1"/>
    <property type="match status" value="1"/>
</dbReference>
<dbReference type="CDD" id="cd11364">
    <property type="entry name" value="RNase_PH_PNPase_2"/>
    <property type="match status" value="1"/>
</dbReference>
<dbReference type="FunFam" id="3.30.1370.10:FF:000001">
    <property type="entry name" value="Polyribonucleotide nucleotidyltransferase"/>
    <property type="match status" value="1"/>
</dbReference>
<dbReference type="FunFam" id="3.30.230.70:FF:000001">
    <property type="entry name" value="Polyribonucleotide nucleotidyltransferase"/>
    <property type="match status" value="1"/>
</dbReference>
<dbReference type="FunFam" id="3.30.230.70:FF:000002">
    <property type="entry name" value="Polyribonucleotide nucleotidyltransferase"/>
    <property type="match status" value="1"/>
</dbReference>
<dbReference type="Gene3D" id="3.30.230.70">
    <property type="entry name" value="GHMP Kinase, N-terminal domain"/>
    <property type="match status" value="2"/>
</dbReference>
<dbReference type="Gene3D" id="3.30.1370.10">
    <property type="entry name" value="K Homology domain, type 1"/>
    <property type="match status" value="1"/>
</dbReference>
<dbReference type="Gene3D" id="2.40.50.140">
    <property type="entry name" value="Nucleic acid-binding proteins"/>
    <property type="match status" value="1"/>
</dbReference>
<dbReference type="HAMAP" id="MF_01595">
    <property type="entry name" value="PNPase"/>
    <property type="match status" value="1"/>
</dbReference>
<dbReference type="InterPro" id="IPR001247">
    <property type="entry name" value="ExoRNase_PH_dom1"/>
</dbReference>
<dbReference type="InterPro" id="IPR015847">
    <property type="entry name" value="ExoRNase_PH_dom2"/>
</dbReference>
<dbReference type="InterPro" id="IPR036345">
    <property type="entry name" value="ExoRNase_PH_dom2_sf"/>
</dbReference>
<dbReference type="InterPro" id="IPR004087">
    <property type="entry name" value="KH_dom"/>
</dbReference>
<dbReference type="InterPro" id="IPR004088">
    <property type="entry name" value="KH_dom_type_1"/>
</dbReference>
<dbReference type="InterPro" id="IPR036612">
    <property type="entry name" value="KH_dom_type_1_sf"/>
</dbReference>
<dbReference type="InterPro" id="IPR012340">
    <property type="entry name" value="NA-bd_OB-fold"/>
</dbReference>
<dbReference type="InterPro" id="IPR012162">
    <property type="entry name" value="PNPase"/>
</dbReference>
<dbReference type="InterPro" id="IPR027408">
    <property type="entry name" value="PNPase/RNase_PH_dom_sf"/>
</dbReference>
<dbReference type="InterPro" id="IPR015848">
    <property type="entry name" value="PNPase_PH_RNA-bd_bac/org-type"/>
</dbReference>
<dbReference type="InterPro" id="IPR036456">
    <property type="entry name" value="PNPase_PH_RNA-bd_sf"/>
</dbReference>
<dbReference type="InterPro" id="IPR020568">
    <property type="entry name" value="Ribosomal_Su5_D2-typ_SF"/>
</dbReference>
<dbReference type="InterPro" id="IPR003029">
    <property type="entry name" value="S1_domain"/>
</dbReference>
<dbReference type="NCBIfam" id="TIGR03591">
    <property type="entry name" value="polynuc_phos"/>
    <property type="match status" value="1"/>
</dbReference>
<dbReference type="NCBIfam" id="NF008805">
    <property type="entry name" value="PRK11824.1"/>
    <property type="match status" value="1"/>
</dbReference>
<dbReference type="PANTHER" id="PTHR11252">
    <property type="entry name" value="POLYRIBONUCLEOTIDE NUCLEOTIDYLTRANSFERASE"/>
    <property type="match status" value="1"/>
</dbReference>
<dbReference type="PANTHER" id="PTHR11252:SF0">
    <property type="entry name" value="POLYRIBONUCLEOTIDE NUCLEOTIDYLTRANSFERASE 1, MITOCHONDRIAL"/>
    <property type="match status" value="1"/>
</dbReference>
<dbReference type="Pfam" id="PF00013">
    <property type="entry name" value="KH_1"/>
    <property type="match status" value="1"/>
</dbReference>
<dbReference type="Pfam" id="PF03726">
    <property type="entry name" value="PNPase"/>
    <property type="match status" value="1"/>
</dbReference>
<dbReference type="Pfam" id="PF01138">
    <property type="entry name" value="RNase_PH"/>
    <property type="match status" value="2"/>
</dbReference>
<dbReference type="Pfam" id="PF03725">
    <property type="entry name" value="RNase_PH_C"/>
    <property type="match status" value="2"/>
</dbReference>
<dbReference type="Pfam" id="PF00575">
    <property type="entry name" value="S1"/>
    <property type="match status" value="1"/>
</dbReference>
<dbReference type="PIRSF" id="PIRSF005499">
    <property type="entry name" value="PNPase"/>
    <property type="match status" value="1"/>
</dbReference>
<dbReference type="SMART" id="SM00322">
    <property type="entry name" value="KH"/>
    <property type="match status" value="1"/>
</dbReference>
<dbReference type="SMART" id="SM00316">
    <property type="entry name" value="S1"/>
    <property type="match status" value="1"/>
</dbReference>
<dbReference type="SUPFAM" id="SSF54791">
    <property type="entry name" value="Eukaryotic type KH-domain (KH-domain type I)"/>
    <property type="match status" value="1"/>
</dbReference>
<dbReference type="SUPFAM" id="SSF50249">
    <property type="entry name" value="Nucleic acid-binding proteins"/>
    <property type="match status" value="1"/>
</dbReference>
<dbReference type="SUPFAM" id="SSF46915">
    <property type="entry name" value="Polynucleotide phosphorylase/guanosine pentaphosphate synthase (PNPase/GPSI), domain 3"/>
    <property type="match status" value="1"/>
</dbReference>
<dbReference type="SUPFAM" id="SSF55666">
    <property type="entry name" value="Ribonuclease PH domain 2-like"/>
    <property type="match status" value="2"/>
</dbReference>
<dbReference type="SUPFAM" id="SSF54211">
    <property type="entry name" value="Ribosomal protein S5 domain 2-like"/>
    <property type="match status" value="2"/>
</dbReference>
<dbReference type="PROSITE" id="PS50084">
    <property type="entry name" value="KH_TYPE_1"/>
    <property type="match status" value="1"/>
</dbReference>
<dbReference type="PROSITE" id="PS50126">
    <property type="entry name" value="S1"/>
    <property type="match status" value="1"/>
</dbReference>